<evidence type="ECO:0000255" key="1">
    <source>
        <dbReference type="HAMAP-Rule" id="MF_00719"/>
    </source>
</evidence>
<sequence length="268" mass="28287">MSSEDTTSQRAPRNWWGPFAPIGEALRFLTILPVPGLPPMSEEAIPQSIRYFPIAGLVIGGILAAVGWGAGVLWNETVRAVVLVVAWGVLTAGMHLDGLSDTFDGVMSWRSRERKLEIMRDSRIGVMGALALAAVLGLKAAFLAGAGDAWLTAVVLAPVLGRWADVYGIVRFPPAREGGLGRTFQSYLRPGDFAGASVATLALALIVGGVGGLIALALVWMVTHLLGRWWTRDLGGLTGDTYGALCEIAEVVALATLTLSAPMRLLAT</sequence>
<accession>A5V212</accession>
<feature type="chain" id="PRO_1000083265" description="Adenosylcobinamide-GDP ribazoletransferase">
    <location>
        <begin position="1"/>
        <end position="268"/>
    </location>
</feature>
<feature type="transmembrane region" description="Helical" evidence="1">
    <location>
        <begin position="54"/>
        <end position="74"/>
    </location>
</feature>
<feature type="transmembrane region" description="Helical" evidence="1">
    <location>
        <begin position="80"/>
        <end position="100"/>
    </location>
</feature>
<feature type="transmembrane region" description="Helical" evidence="1">
    <location>
        <begin position="124"/>
        <end position="144"/>
    </location>
</feature>
<feature type="transmembrane region" description="Helical" evidence="1">
    <location>
        <begin position="150"/>
        <end position="170"/>
    </location>
</feature>
<feature type="transmembrane region" description="Helical" evidence="1">
    <location>
        <begin position="202"/>
        <end position="222"/>
    </location>
</feature>
<feature type="transmembrane region" description="Helical" evidence="1">
    <location>
        <begin position="243"/>
        <end position="263"/>
    </location>
</feature>
<keyword id="KW-1003">Cell membrane</keyword>
<keyword id="KW-0169">Cobalamin biosynthesis</keyword>
<keyword id="KW-0460">Magnesium</keyword>
<keyword id="KW-0472">Membrane</keyword>
<keyword id="KW-0808">Transferase</keyword>
<keyword id="KW-0812">Transmembrane</keyword>
<keyword id="KW-1133">Transmembrane helix</keyword>
<name>COBS_ROSS1</name>
<protein>
    <recommendedName>
        <fullName evidence="1">Adenosylcobinamide-GDP ribazoletransferase</fullName>
        <ecNumber evidence="1">2.7.8.26</ecNumber>
    </recommendedName>
    <alternativeName>
        <fullName evidence="1">Cobalamin synthase</fullName>
    </alternativeName>
    <alternativeName>
        <fullName evidence="1">Cobalamin-5'-phosphate synthase</fullName>
    </alternativeName>
</protein>
<proteinExistence type="inferred from homology"/>
<dbReference type="EC" id="2.7.8.26" evidence="1"/>
<dbReference type="EMBL" id="CP000686">
    <property type="protein sequence ID" value="ABQ92915.1"/>
    <property type="molecule type" value="Genomic_DNA"/>
</dbReference>
<dbReference type="RefSeq" id="WP_011959252.1">
    <property type="nucleotide sequence ID" value="NC_009523.1"/>
</dbReference>
<dbReference type="STRING" id="357808.RoseRS_4584"/>
<dbReference type="KEGG" id="rrs:RoseRS_4584"/>
<dbReference type="eggNOG" id="COG0368">
    <property type="taxonomic scope" value="Bacteria"/>
</dbReference>
<dbReference type="HOGENOM" id="CLU_057426_1_1_0"/>
<dbReference type="OrthoDB" id="9794626at2"/>
<dbReference type="UniPathway" id="UPA00148">
    <property type="reaction ID" value="UER00238"/>
</dbReference>
<dbReference type="Proteomes" id="UP000006554">
    <property type="component" value="Chromosome"/>
</dbReference>
<dbReference type="GO" id="GO:0005886">
    <property type="term" value="C:plasma membrane"/>
    <property type="evidence" value="ECO:0007669"/>
    <property type="project" value="UniProtKB-SubCell"/>
</dbReference>
<dbReference type="GO" id="GO:0051073">
    <property type="term" value="F:adenosylcobinamide-GDP ribazoletransferase activity"/>
    <property type="evidence" value="ECO:0007669"/>
    <property type="project" value="UniProtKB-UniRule"/>
</dbReference>
<dbReference type="GO" id="GO:0008818">
    <property type="term" value="F:cobalamin 5'-phosphate synthase activity"/>
    <property type="evidence" value="ECO:0007669"/>
    <property type="project" value="UniProtKB-UniRule"/>
</dbReference>
<dbReference type="GO" id="GO:0009236">
    <property type="term" value="P:cobalamin biosynthetic process"/>
    <property type="evidence" value="ECO:0007669"/>
    <property type="project" value="UniProtKB-UniRule"/>
</dbReference>
<dbReference type="HAMAP" id="MF_00719">
    <property type="entry name" value="CobS"/>
    <property type="match status" value="1"/>
</dbReference>
<dbReference type="InterPro" id="IPR003805">
    <property type="entry name" value="CobS"/>
</dbReference>
<dbReference type="NCBIfam" id="TIGR00317">
    <property type="entry name" value="cobS"/>
    <property type="match status" value="1"/>
</dbReference>
<dbReference type="PANTHER" id="PTHR34148">
    <property type="entry name" value="ADENOSYLCOBINAMIDE-GDP RIBAZOLETRANSFERASE"/>
    <property type="match status" value="1"/>
</dbReference>
<dbReference type="PANTHER" id="PTHR34148:SF1">
    <property type="entry name" value="ADENOSYLCOBINAMIDE-GDP RIBAZOLETRANSFERASE"/>
    <property type="match status" value="1"/>
</dbReference>
<dbReference type="Pfam" id="PF02654">
    <property type="entry name" value="CobS"/>
    <property type="match status" value="1"/>
</dbReference>
<organism>
    <name type="scientific">Roseiflexus sp. (strain RS-1)</name>
    <dbReference type="NCBI Taxonomy" id="357808"/>
    <lineage>
        <taxon>Bacteria</taxon>
        <taxon>Bacillati</taxon>
        <taxon>Chloroflexota</taxon>
        <taxon>Chloroflexia</taxon>
        <taxon>Chloroflexales</taxon>
        <taxon>Roseiflexineae</taxon>
        <taxon>Roseiflexaceae</taxon>
        <taxon>Roseiflexus</taxon>
    </lineage>
</organism>
<reference key="1">
    <citation type="submission" date="2007-04" db="EMBL/GenBank/DDBJ databases">
        <title>Complete sequence of Roseiflexus sp. RS-1.</title>
        <authorList>
            <consortium name="US DOE Joint Genome Institute"/>
            <person name="Copeland A."/>
            <person name="Lucas S."/>
            <person name="Lapidus A."/>
            <person name="Barry K."/>
            <person name="Detter J.C."/>
            <person name="Glavina del Rio T."/>
            <person name="Hammon N."/>
            <person name="Israni S."/>
            <person name="Dalin E."/>
            <person name="Tice H."/>
            <person name="Pitluck S."/>
            <person name="Chertkov O."/>
            <person name="Brettin T."/>
            <person name="Bruce D."/>
            <person name="Han C."/>
            <person name="Schmutz J."/>
            <person name="Larimer F."/>
            <person name="Land M."/>
            <person name="Hauser L."/>
            <person name="Kyrpides N."/>
            <person name="Mikhailova N."/>
            <person name="Bryant D.A."/>
            <person name="Richardson P."/>
        </authorList>
    </citation>
    <scope>NUCLEOTIDE SEQUENCE [LARGE SCALE GENOMIC DNA]</scope>
    <source>
        <strain>RS-1</strain>
    </source>
</reference>
<comment type="function">
    <text evidence="1">Joins adenosylcobinamide-GDP and alpha-ribazole to generate adenosylcobalamin (Ado-cobalamin). Also synthesizes adenosylcobalamin 5'-phosphate from adenosylcobinamide-GDP and alpha-ribazole 5'-phosphate.</text>
</comment>
<comment type="catalytic activity">
    <reaction evidence="1">
        <text>alpha-ribazole + adenosylcob(III)inamide-GDP = adenosylcob(III)alamin + GMP + H(+)</text>
        <dbReference type="Rhea" id="RHEA:16049"/>
        <dbReference type="ChEBI" id="CHEBI:10329"/>
        <dbReference type="ChEBI" id="CHEBI:15378"/>
        <dbReference type="ChEBI" id="CHEBI:18408"/>
        <dbReference type="ChEBI" id="CHEBI:58115"/>
        <dbReference type="ChEBI" id="CHEBI:60487"/>
        <dbReference type="EC" id="2.7.8.26"/>
    </reaction>
</comment>
<comment type="catalytic activity">
    <reaction evidence="1">
        <text>alpha-ribazole 5'-phosphate + adenosylcob(III)inamide-GDP = adenosylcob(III)alamin 5'-phosphate + GMP + H(+)</text>
        <dbReference type="Rhea" id="RHEA:23560"/>
        <dbReference type="ChEBI" id="CHEBI:15378"/>
        <dbReference type="ChEBI" id="CHEBI:57918"/>
        <dbReference type="ChEBI" id="CHEBI:58115"/>
        <dbReference type="ChEBI" id="CHEBI:60487"/>
        <dbReference type="ChEBI" id="CHEBI:60493"/>
        <dbReference type="EC" id="2.7.8.26"/>
    </reaction>
</comment>
<comment type="cofactor">
    <cofactor evidence="1">
        <name>Mg(2+)</name>
        <dbReference type="ChEBI" id="CHEBI:18420"/>
    </cofactor>
</comment>
<comment type="pathway">
    <text evidence="1">Cofactor biosynthesis; adenosylcobalamin biosynthesis; adenosylcobalamin from cob(II)yrinate a,c-diamide: step 7/7.</text>
</comment>
<comment type="subcellular location">
    <subcellularLocation>
        <location evidence="1">Cell membrane</location>
        <topology evidence="1">Multi-pass membrane protein</topology>
    </subcellularLocation>
</comment>
<comment type="similarity">
    <text evidence="1">Belongs to the CobS family.</text>
</comment>
<gene>
    <name evidence="1" type="primary">cobS</name>
    <name type="ordered locus">RoseRS_4584</name>
</gene>